<feature type="chain" id="PRO_0000238188" description="ATP synthase subunit alpha">
    <location>
        <begin position="1"/>
        <end position="510"/>
    </location>
</feature>
<feature type="binding site" evidence="1">
    <location>
        <begin position="169"/>
        <end position="176"/>
    </location>
    <ligand>
        <name>ATP</name>
        <dbReference type="ChEBI" id="CHEBI:30616"/>
    </ligand>
</feature>
<feature type="site" description="Required for activity" evidence="1">
    <location>
        <position position="362"/>
    </location>
</feature>
<gene>
    <name evidence="1" type="primary">atpA</name>
    <name type="ordered locus">Adeh_4350</name>
</gene>
<protein>
    <recommendedName>
        <fullName evidence="1">ATP synthase subunit alpha</fullName>
        <ecNumber evidence="1">7.1.2.2</ecNumber>
    </recommendedName>
    <alternativeName>
        <fullName evidence="1">ATP synthase F1 sector subunit alpha</fullName>
    </alternativeName>
    <alternativeName>
        <fullName evidence="1">F-ATPase subunit alpha</fullName>
    </alternativeName>
</protein>
<evidence type="ECO:0000255" key="1">
    <source>
        <dbReference type="HAMAP-Rule" id="MF_01346"/>
    </source>
</evidence>
<accession>Q2IHQ9</accession>
<name>ATPA_ANADE</name>
<sequence>MEIRADEISRIIREQIKDYGKKVEVAETGSILSQADGVARIYGLAGAAAGELLEFPGGIRGLVLNLEEDNVGAAIMGPYEHIREGDPVKRTGLIAEVPVGEELLGRVVDGLGNPIDGRGPLNAKHQRKIEIKAPGIVKRKSVHEPMQTGLKAIDALVPIGRGQRELILGDRQTGKTAVAIDTILNNKGNNLYCFYVAIGQKQSTVARVVDTLKKHGAMEYTTVISASASDPAPMQYLAPYTGVTMAEYFRDSGRHALIIYDDLSKQAVAYRQLSLLLRRPPGREAYPGDVFYLHSRLLERAAKLSDKEGAGSLTALPIIETQAGDVSAYIPTNVISITDGQIFLESNLFFQGVRPAINVGISVSRVGGSAQIKAMKQVAGSLKLDLAQYRELAAFAQFGSDLDKATQETLARGERLVELLKQGQYAPLSVEKQVIQIYAGTQKDAGGHNWIRSVPTEQVVRYMAELLEFLDARHPGIAKAIAEKKALDDGIRKDLDAALTEFAGIFKIEG</sequence>
<keyword id="KW-0066">ATP synthesis</keyword>
<keyword id="KW-0067">ATP-binding</keyword>
<keyword id="KW-0997">Cell inner membrane</keyword>
<keyword id="KW-1003">Cell membrane</keyword>
<keyword id="KW-0139">CF(1)</keyword>
<keyword id="KW-0375">Hydrogen ion transport</keyword>
<keyword id="KW-0406">Ion transport</keyword>
<keyword id="KW-0472">Membrane</keyword>
<keyword id="KW-0547">Nucleotide-binding</keyword>
<keyword id="KW-1185">Reference proteome</keyword>
<keyword id="KW-1278">Translocase</keyword>
<keyword id="KW-0813">Transport</keyword>
<dbReference type="EC" id="7.1.2.2" evidence="1"/>
<dbReference type="EMBL" id="CP000251">
    <property type="protein sequence ID" value="ABC84113.1"/>
    <property type="molecule type" value="Genomic_DNA"/>
</dbReference>
<dbReference type="RefSeq" id="WP_011423395.1">
    <property type="nucleotide sequence ID" value="NC_007760.1"/>
</dbReference>
<dbReference type="SMR" id="Q2IHQ9"/>
<dbReference type="STRING" id="290397.Adeh_4350"/>
<dbReference type="KEGG" id="ade:Adeh_4350"/>
<dbReference type="eggNOG" id="COG0056">
    <property type="taxonomic scope" value="Bacteria"/>
</dbReference>
<dbReference type="HOGENOM" id="CLU_010091_2_1_7"/>
<dbReference type="OrthoDB" id="9803053at2"/>
<dbReference type="Proteomes" id="UP000001935">
    <property type="component" value="Chromosome"/>
</dbReference>
<dbReference type="GO" id="GO:0005886">
    <property type="term" value="C:plasma membrane"/>
    <property type="evidence" value="ECO:0007669"/>
    <property type="project" value="UniProtKB-SubCell"/>
</dbReference>
<dbReference type="GO" id="GO:0045259">
    <property type="term" value="C:proton-transporting ATP synthase complex"/>
    <property type="evidence" value="ECO:0007669"/>
    <property type="project" value="UniProtKB-KW"/>
</dbReference>
<dbReference type="GO" id="GO:0043531">
    <property type="term" value="F:ADP binding"/>
    <property type="evidence" value="ECO:0007669"/>
    <property type="project" value="TreeGrafter"/>
</dbReference>
<dbReference type="GO" id="GO:0005524">
    <property type="term" value="F:ATP binding"/>
    <property type="evidence" value="ECO:0007669"/>
    <property type="project" value="UniProtKB-UniRule"/>
</dbReference>
<dbReference type="GO" id="GO:0046933">
    <property type="term" value="F:proton-transporting ATP synthase activity, rotational mechanism"/>
    <property type="evidence" value="ECO:0007669"/>
    <property type="project" value="UniProtKB-UniRule"/>
</dbReference>
<dbReference type="CDD" id="cd18113">
    <property type="entry name" value="ATP-synt_F1_alpha_C"/>
    <property type="match status" value="1"/>
</dbReference>
<dbReference type="CDD" id="cd18116">
    <property type="entry name" value="ATP-synt_F1_alpha_N"/>
    <property type="match status" value="1"/>
</dbReference>
<dbReference type="CDD" id="cd01132">
    <property type="entry name" value="F1-ATPase_alpha_CD"/>
    <property type="match status" value="1"/>
</dbReference>
<dbReference type="FunFam" id="1.20.150.20:FF:000001">
    <property type="entry name" value="ATP synthase subunit alpha"/>
    <property type="match status" value="1"/>
</dbReference>
<dbReference type="FunFam" id="2.40.30.20:FF:000001">
    <property type="entry name" value="ATP synthase subunit alpha"/>
    <property type="match status" value="1"/>
</dbReference>
<dbReference type="FunFam" id="3.40.50.300:FF:000002">
    <property type="entry name" value="ATP synthase subunit alpha"/>
    <property type="match status" value="1"/>
</dbReference>
<dbReference type="Gene3D" id="2.40.30.20">
    <property type="match status" value="1"/>
</dbReference>
<dbReference type="Gene3D" id="1.20.150.20">
    <property type="entry name" value="ATP synthase alpha/beta chain, C-terminal domain"/>
    <property type="match status" value="1"/>
</dbReference>
<dbReference type="Gene3D" id="3.40.50.300">
    <property type="entry name" value="P-loop containing nucleotide triphosphate hydrolases"/>
    <property type="match status" value="1"/>
</dbReference>
<dbReference type="HAMAP" id="MF_01346">
    <property type="entry name" value="ATP_synth_alpha_bact"/>
    <property type="match status" value="1"/>
</dbReference>
<dbReference type="InterPro" id="IPR023366">
    <property type="entry name" value="ATP_synth_asu-like_sf"/>
</dbReference>
<dbReference type="InterPro" id="IPR000793">
    <property type="entry name" value="ATP_synth_asu_C"/>
</dbReference>
<dbReference type="InterPro" id="IPR038376">
    <property type="entry name" value="ATP_synth_asu_C_sf"/>
</dbReference>
<dbReference type="InterPro" id="IPR033732">
    <property type="entry name" value="ATP_synth_F1_a_nt-bd_dom"/>
</dbReference>
<dbReference type="InterPro" id="IPR005294">
    <property type="entry name" value="ATP_synth_F1_asu"/>
</dbReference>
<dbReference type="InterPro" id="IPR020003">
    <property type="entry name" value="ATPase_a/bsu_AS"/>
</dbReference>
<dbReference type="InterPro" id="IPR004100">
    <property type="entry name" value="ATPase_F1/V1/A1_a/bsu_N"/>
</dbReference>
<dbReference type="InterPro" id="IPR036121">
    <property type="entry name" value="ATPase_F1/V1/A1_a/bsu_N_sf"/>
</dbReference>
<dbReference type="InterPro" id="IPR000194">
    <property type="entry name" value="ATPase_F1/V1/A1_a/bsu_nucl-bd"/>
</dbReference>
<dbReference type="InterPro" id="IPR027417">
    <property type="entry name" value="P-loop_NTPase"/>
</dbReference>
<dbReference type="NCBIfam" id="TIGR00962">
    <property type="entry name" value="atpA"/>
    <property type="match status" value="1"/>
</dbReference>
<dbReference type="NCBIfam" id="NF009884">
    <property type="entry name" value="PRK13343.1"/>
    <property type="match status" value="1"/>
</dbReference>
<dbReference type="PANTHER" id="PTHR48082">
    <property type="entry name" value="ATP SYNTHASE SUBUNIT ALPHA, MITOCHONDRIAL"/>
    <property type="match status" value="1"/>
</dbReference>
<dbReference type="PANTHER" id="PTHR48082:SF2">
    <property type="entry name" value="ATP SYNTHASE SUBUNIT ALPHA, MITOCHONDRIAL"/>
    <property type="match status" value="1"/>
</dbReference>
<dbReference type="Pfam" id="PF00006">
    <property type="entry name" value="ATP-synt_ab"/>
    <property type="match status" value="1"/>
</dbReference>
<dbReference type="Pfam" id="PF00306">
    <property type="entry name" value="ATP-synt_ab_C"/>
    <property type="match status" value="1"/>
</dbReference>
<dbReference type="Pfam" id="PF02874">
    <property type="entry name" value="ATP-synt_ab_N"/>
    <property type="match status" value="1"/>
</dbReference>
<dbReference type="PIRSF" id="PIRSF039088">
    <property type="entry name" value="F_ATPase_subunit_alpha"/>
    <property type="match status" value="1"/>
</dbReference>
<dbReference type="SUPFAM" id="SSF47917">
    <property type="entry name" value="C-terminal domain of alpha and beta subunits of F1 ATP synthase"/>
    <property type="match status" value="1"/>
</dbReference>
<dbReference type="SUPFAM" id="SSF50615">
    <property type="entry name" value="N-terminal domain of alpha and beta subunits of F1 ATP synthase"/>
    <property type="match status" value="1"/>
</dbReference>
<dbReference type="SUPFAM" id="SSF52540">
    <property type="entry name" value="P-loop containing nucleoside triphosphate hydrolases"/>
    <property type="match status" value="1"/>
</dbReference>
<dbReference type="PROSITE" id="PS00152">
    <property type="entry name" value="ATPASE_ALPHA_BETA"/>
    <property type="match status" value="1"/>
</dbReference>
<proteinExistence type="inferred from homology"/>
<organism>
    <name type="scientific">Anaeromyxobacter dehalogenans (strain 2CP-C)</name>
    <dbReference type="NCBI Taxonomy" id="290397"/>
    <lineage>
        <taxon>Bacteria</taxon>
        <taxon>Pseudomonadati</taxon>
        <taxon>Myxococcota</taxon>
        <taxon>Myxococcia</taxon>
        <taxon>Myxococcales</taxon>
        <taxon>Cystobacterineae</taxon>
        <taxon>Anaeromyxobacteraceae</taxon>
        <taxon>Anaeromyxobacter</taxon>
    </lineage>
</organism>
<comment type="function">
    <text evidence="1">Produces ATP from ADP in the presence of a proton gradient across the membrane. The alpha chain is a regulatory subunit.</text>
</comment>
<comment type="catalytic activity">
    <reaction evidence="1">
        <text>ATP + H2O + 4 H(+)(in) = ADP + phosphate + 5 H(+)(out)</text>
        <dbReference type="Rhea" id="RHEA:57720"/>
        <dbReference type="ChEBI" id="CHEBI:15377"/>
        <dbReference type="ChEBI" id="CHEBI:15378"/>
        <dbReference type="ChEBI" id="CHEBI:30616"/>
        <dbReference type="ChEBI" id="CHEBI:43474"/>
        <dbReference type="ChEBI" id="CHEBI:456216"/>
        <dbReference type="EC" id="7.1.2.2"/>
    </reaction>
</comment>
<comment type="subunit">
    <text evidence="1">F-type ATPases have 2 components, CF(1) - the catalytic core - and CF(0) - the membrane proton channel. CF(1) has five subunits: alpha(3), beta(3), gamma(1), delta(1), epsilon(1). CF(0) has three main subunits: a(1), b(2) and c(9-12). The alpha and beta chains form an alternating ring which encloses part of the gamma chain. CF(1) is attached to CF(0) by a central stalk formed by the gamma and epsilon chains, while a peripheral stalk is formed by the delta and b chains.</text>
</comment>
<comment type="subcellular location">
    <subcellularLocation>
        <location evidence="1">Cell inner membrane</location>
        <topology evidence="1">Peripheral membrane protein</topology>
    </subcellularLocation>
</comment>
<comment type="similarity">
    <text evidence="1">Belongs to the ATPase alpha/beta chains family.</text>
</comment>
<reference key="1">
    <citation type="submission" date="2006-01" db="EMBL/GenBank/DDBJ databases">
        <title>Complete sequence of Anaeromyxobacter dehalogenans 2CP-C.</title>
        <authorList>
            <person name="Copeland A."/>
            <person name="Lucas S."/>
            <person name="Lapidus A."/>
            <person name="Barry K."/>
            <person name="Detter J.C."/>
            <person name="Glavina T."/>
            <person name="Hammon N."/>
            <person name="Israni S."/>
            <person name="Pitluck S."/>
            <person name="Brettin T."/>
            <person name="Bruce D."/>
            <person name="Han C."/>
            <person name="Tapia R."/>
            <person name="Gilna P."/>
            <person name="Kiss H."/>
            <person name="Schmutz J."/>
            <person name="Larimer F."/>
            <person name="Land M."/>
            <person name="Kyrpides N."/>
            <person name="Anderson I."/>
            <person name="Sanford R.A."/>
            <person name="Ritalahti K.M."/>
            <person name="Thomas H.S."/>
            <person name="Kirby J.R."/>
            <person name="Zhulin I.B."/>
            <person name="Loeffler F.E."/>
            <person name="Richardson P."/>
        </authorList>
    </citation>
    <scope>NUCLEOTIDE SEQUENCE [LARGE SCALE GENOMIC DNA]</scope>
    <source>
        <strain>2CP-C</strain>
    </source>
</reference>